<protein>
    <recommendedName>
        <fullName evidence="1">S-adenosylmethionine synthase</fullName>
        <shortName evidence="1">AdoMet synthase</shortName>
        <ecNumber evidence="1">2.5.1.6</ecNumber>
    </recommendedName>
    <alternativeName>
        <fullName evidence="1">MAT</fullName>
    </alternativeName>
    <alternativeName>
        <fullName evidence="1">Methionine adenosyltransferase</fullName>
    </alternativeName>
</protein>
<proteinExistence type="inferred from homology"/>
<reference key="1">
    <citation type="journal article" date="2008" name="J. Bacteriol.">
        <title>The pangenome structure of Escherichia coli: comparative genomic analysis of E. coli commensal and pathogenic isolates.</title>
        <authorList>
            <person name="Rasko D.A."/>
            <person name="Rosovitz M.J."/>
            <person name="Myers G.S.A."/>
            <person name="Mongodin E.F."/>
            <person name="Fricke W.F."/>
            <person name="Gajer P."/>
            <person name="Crabtree J."/>
            <person name="Sebaihia M."/>
            <person name="Thomson N.R."/>
            <person name="Chaudhuri R."/>
            <person name="Henderson I.R."/>
            <person name="Sperandio V."/>
            <person name="Ravel J."/>
        </authorList>
    </citation>
    <scope>NUCLEOTIDE SEQUENCE [LARGE SCALE GENOMIC DNA]</scope>
    <source>
        <strain>HS</strain>
    </source>
</reference>
<accession>A8A481</accession>
<keyword id="KW-0067">ATP-binding</keyword>
<keyword id="KW-0963">Cytoplasm</keyword>
<keyword id="KW-0460">Magnesium</keyword>
<keyword id="KW-0479">Metal-binding</keyword>
<keyword id="KW-0547">Nucleotide-binding</keyword>
<keyword id="KW-0554">One-carbon metabolism</keyword>
<keyword id="KW-0630">Potassium</keyword>
<keyword id="KW-0808">Transferase</keyword>
<organism>
    <name type="scientific">Escherichia coli O9:H4 (strain HS)</name>
    <dbReference type="NCBI Taxonomy" id="331112"/>
    <lineage>
        <taxon>Bacteria</taxon>
        <taxon>Pseudomonadati</taxon>
        <taxon>Pseudomonadota</taxon>
        <taxon>Gammaproteobacteria</taxon>
        <taxon>Enterobacterales</taxon>
        <taxon>Enterobacteriaceae</taxon>
        <taxon>Escherichia</taxon>
    </lineage>
</organism>
<gene>
    <name evidence="1" type="primary">metK</name>
    <name type="ordered locus">EcHS_A3099</name>
</gene>
<comment type="function">
    <text evidence="1">Catalyzes the formation of S-adenosylmethionine (AdoMet) from methionine and ATP. The overall synthetic reaction is composed of two sequential steps, AdoMet formation and the subsequent tripolyphosphate hydrolysis which occurs prior to release of AdoMet from the enzyme.</text>
</comment>
<comment type="catalytic activity">
    <reaction evidence="1">
        <text>L-methionine + ATP + H2O = S-adenosyl-L-methionine + phosphate + diphosphate</text>
        <dbReference type="Rhea" id="RHEA:21080"/>
        <dbReference type="ChEBI" id="CHEBI:15377"/>
        <dbReference type="ChEBI" id="CHEBI:30616"/>
        <dbReference type="ChEBI" id="CHEBI:33019"/>
        <dbReference type="ChEBI" id="CHEBI:43474"/>
        <dbReference type="ChEBI" id="CHEBI:57844"/>
        <dbReference type="ChEBI" id="CHEBI:59789"/>
        <dbReference type="EC" id="2.5.1.6"/>
    </reaction>
</comment>
<comment type="cofactor">
    <cofactor evidence="1">
        <name>Mg(2+)</name>
        <dbReference type="ChEBI" id="CHEBI:18420"/>
    </cofactor>
    <text evidence="1">Binds 2 divalent ions per subunit.</text>
</comment>
<comment type="cofactor">
    <cofactor evidence="1">
        <name>K(+)</name>
        <dbReference type="ChEBI" id="CHEBI:29103"/>
    </cofactor>
    <text evidence="1">Binds 1 potassium ion per subunit.</text>
</comment>
<comment type="pathway">
    <text evidence="1">Amino-acid biosynthesis; S-adenosyl-L-methionine biosynthesis; S-adenosyl-L-methionine from L-methionine: step 1/1.</text>
</comment>
<comment type="subunit">
    <text evidence="1">Homotetramer; dimer of dimers.</text>
</comment>
<comment type="subcellular location">
    <subcellularLocation>
        <location evidence="1">Cytoplasm</location>
    </subcellularLocation>
</comment>
<comment type="similarity">
    <text evidence="1">Belongs to the AdoMet synthase family.</text>
</comment>
<evidence type="ECO:0000255" key="1">
    <source>
        <dbReference type="HAMAP-Rule" id="MF_00086"/>
    </source>
</evidence>
<dbReference type="EC" id="2.5.1.6" evidence="1"/>
<dbReference type="EMBL" id="CP000802">
    <property type="protein sequence ID" value="ABV07335.1"/>
    <property type="molecule type" value="Genomic_DNA"/>
</dbReference>
<dbReference type="RefSeq" id="WP_001062128.1">
    <property type="nucleotide sequence ID" value="NC_009800.1"/>
</dbReference>
<dbReference type="SMR" id="A8A481"/>
<dbReference type="GeneID" id="93779055"/>
<dbReference type="KEGG" id="ecx:EcHS_A3099"/>
<dbReference type="HOGENOM" id="CLU_041802_1_1_6"/>
<dbReference type="UniPathway" id="UPA00315">
    <property type="reaction ID" value="UER00080"/>
</dbReference>
<dbReference type="GO" id="GO:0005737">
    <property type="term" value="C:cytoplasm"/>
    <property type="evidence" value="ECO:0007669"/>
    <property type="project" value="UniProtKB-SubCell"/>
</dbReference>
<dbReference type="GO" id="GO:0005524">
    <property type="term" value="F:ATP binding"/>
    <property type="evidence" value="ECO:0007669"/>
    <property type="project" value="UniProtKB-UniRule"/>
</dbReference>
<dbReference type="GO" id="GO:0000287">
    <property type="term" value="F:magnesium ion binding"/>
    <property type="evidence" value="ECO:0007669"/>
    <property type="project" value="UniProtKB-UniRule"/>
</dbReference>
<dbReference type="GO" id="GO:0004478">
    <property type="term" value="F:methionine adenosyltransferase activity"/>
    <property type="evidence" value="ECO:0007669"/>
    <property type="project" value="UniProtKB-UniRule"/>
</dbReference>
<dbReference type="GO" id="GO:0006730">
    <property type="term" value="P:one-carbon metabolic process"/>
    <property type="evidence" value="ECO:0007669"/>
    <property type="project" value="UniProtKB-KW"/>
</dbReference>
<dbReference type="GO" id="GO:0006556">
    <property type="term" value="P:S-adenosylmethionine biosynthetic process"/>
    <property type="evidence" value="ECO:0007669"/>
    <property type="project" value="UniProtKB-UniRule"/>
</dbReference>
<dbReference type="CDD" id="cd18079">
    <property type="entry name" value="S-AdoMet_synt"/>
    <property type="match status" value="1"/>
</dbReference>
<dbReference type="FunFam" id="3.30.300.10:FF:000001">
    <property type="entry name" value="S-adenosylmethionine synthase"/>
    <property type="match status" value="1"/>
</dbReference>
<dbReference type="FunFam" id="3.30.300.10:FF:000003">
    <property type="entry name" value="S-adenosylmethionine synthase"/>
    <property type="match status" value="1"/>
</dbReference>
<dbReference type="Gene3D" id="3.30.300.10">
    <property type="match status" value="3"/>
</dbReference>
<dbReference type="HAMAP" id="MF_00086">
    <property type="entry name" value="S_AdoMet_synth1"/>
    <property type="match status" value="1"/>
</dbReference>
<dbReference type="InterPro" id="IPR022631">
    <property type="entry name" value="ADOMET_SYNTHASE_CS"/>
</dbReference>
<dbReference type="InterPro" id="IPR022630">
    <property type="entry name" value="S-AdoMet_synt_C"/>
</dbReference>
<dbReference type="InterPro" id="IPR022629">
    <property type="entry name" value="S-AdoMet_synt_central"/>
</dbReference>
<dbReference type="InterPro" id="IPR022628">
    <property type="entry name" value="S-AdoMet_synt_N"/>
</dbReference>
<dbReference type="InterPro" id="IPR002133">
    <property type="entry name" value="S-AdoMet_synthetase"/>
</dbReference>
<dbReference type="InterPro" id="IPR022636">
    <property type="entry name" value="S-AdoMet_synthetase_sfam"/>
</dbReference>
<dbReference type="NCBIfam" id="TIGR01034">
    <property type="entry name" value="metK"/>
    <property type="match status" value="1"/>
</dbReference>
<dbReference type="PANTHER" id="PTHR11964">
    <property type="entry name" value="S-ADENOSYLMETHIONINE SYNTHETASE"/>
    <property type="match status" value="1"/>
</dbReference>
<dbReference type="Pfam" id="PF02773">
    <property type="entry name" value="S-AdoMet_synt_C"/>
    <property type="match status" value="1"/>
</dbReference>
<dbReference type="Pfam" id="PF02772">
    <property type="entry name" value="S-AdoMet_synt_M"/>
    <property type="match status" value="1"/>
</dbReference>
<dbReference type="Pfam" id="PF00438">
    <property type="entry name" value="S-AdoMet_synt_N"/>
    <property type="match status" value="1"/>
</dbReference>
<dbReference type="PIRSF" id="PIRSF000497">
    <property type="entry name" value="MAT"/>
    <property type="match status" value="1"/>
</dbReference>
<dbReference type="SUPFAM" id="SSF55973">
    <property type="entry name" value="S-adenosylmethionine synthetase"/>
    <property type="match status" value="3"/>
</dbReference>
<dbReference type="PROSITE" id="PS00376">
    <property type="entry name" value="ADOMET_SYNTHASE_1"/>
    <property type="match status" value="1"/>
</dbReference>
<dbReference type="PROSITE" id="PS00377">
    <property type="entry name" value="ADOMET_SYNTHASE_2"/>
    <property type="match status" value="1"/>
</dbReference>
<sequence>MAKHLFTSESVSEGHPDKIADQISDAVLDAILEQDPKARVACETYVKTGMVLVGGEITTSAWVDIEEITRNTVREIGYVHSDMGFDANSCAVLSAIGKQSPDINQGVDRADPLEQGAGDQGLMFGYATNETDVLMPAPITYAHRLVQRQAEVRKNGTLPWLRPDAKSQVTFQYDDGKIVGIDAVVLSTQHSEEIDQKSLQEAVMEEIIKPILPAEWLTSATKFFINPTGRFVIGGPMGDCGLTGRKIIVDTYGGMARHGGGAFSGKDPSKVDRSAAYAARYVAKNIVAAGLADRCEIQVSYAIGVAEPTSIMVETFGTEKVPSEQLTLLVREFFDLRPYGLIQMLDLLHPIYKETAAYGHFGREHFPWEKTDKAQLLRDAAGLK</sequence>
<name>METK_ECOHS</name>
<feature type="chain" id="PRO_1000057560" description="S-adenosylmethionine synthase">
    <location>
        <begin position="1"/>
        <end position="384"/>
    </location>
</feature>
<feature type="region of interest" description="Flexible loop" evidence="1">
    <location>
        <begin position="99"/>
        <end position="109"/>
    </location>
</feature>
<feature type="binding site" description="in other chain" evidence="1">
    <location>
        <position position="15"/>
    </location>
    <ligand>
        <name>ATP</name>
        <dbReference type="ChEBI" id="CHEBI:30616"/>
        <note>ligand shared between two neighboring subunits</note>
    </ligand>
</feature>
<feature type="binding site" evidence="1">
    <location>
        <position position="17"/>
    </location>
    <ligand>
        <name>Mg(2+)</name>
        <dbReference type="ChEBI" id="CHEBI:18420"/>
    </ligand>
</feature>
<feature type="binding site" evidence="1">
    <location>
        <position position="43"/>
    </location>
    <ligand>
        <name>K(+)</name>
        <dbReference type="ChEBI" id="CHEBI:29103"/>
    </ligand>
</feature>
<feature type="binding site" description="in other chain" evidence="1">
    <location>
        <position position="56"/>
    </location>
    <ligand>
        <name>L-methionine</name>
        <dbReference type="ChEBI" id="CHEBI:57844"/>
        <note>ligand shared between two neighboring subunits</note>
    </ligand>
</feature>
<feature type="binding site" description="in other chain" evidence="1">
    <location>
        <position position="99"/>
    </location>
    <ligand>
        <name>L-methionine</name>
        <dbReference type="ChEBI" id="CHEBI:57844"/>
        <note>ligand shared between two neighboring subunits</note>
    </ligand>
</feature>
<feature type="binding site" description="in other chain" evidence="1">
    <location>
        <begin position="164"/>
        <end position="166"/>
    </location>
    <ligand>
        <name>ATP</name>
        <dbReference type="ChEBI" id="CHEBI:30616"/>
        <note>ligand shared between two neighboring subunits</note>
    </ligand>
</feature>
<feature type="binding site" description="in other chain" evidence="1">
    <location>
        <begin position="230"/>
        <end position="231"/>
    </location>
    <ligand>
        <name>ATP</name>
        <dbReference type="ChEBI" id="CHEBI:30616"/>
        <note>ligand shared between two neighboring subunits</note>
    </ligand>
</feature>
<feature type="binding site" evidence="1">
    <location>
        <position position="239"/>
    </location>
    <ligand>
        <name>ATP</name>
        <dbReference type="ChEBI" id="CHEBI:30616"/>
        <note>ligand shared between two neighboring subunits</note>
    </ligand>
</feature>
<feature type="binding site" evidence="1">
    <location>
        <position position="239"/>
    </location>
    <ligand>
        <name>L-methionine</name>
        <dbReference type="ChEBI" id="CHEBI:57844"/>
        <note>ligand shared between two neighboring subunits</note>
    </ligand>
</feature>
<feature type="binding site" description="in other chain" evidence="1">
    <location>
        <begin position="245"/>
        <end position="246"/>
    </location>
    <ligand>
        <name>ATP</name>
        <dbReference type="ChEBI" id="CHEBI:30616"/>
        <note>ligand shared between two neighboring subunits</note>
    </ligand>
</feature>
<feature type="binding site" evidence="1">
    <location>
        <position position="262"/>
    </location>
    <ligand>
        <name>ATP</name>
        <dbReference type="ChEBI" id="CHEBI:30616"/>
        <note>ligand shared between two neighboring subunits</note>
    </ligand>
</feature>
<feature type="binding site" evidence="1">
    <location>
        <position position="266"/>
    </location>
    <ligand>
        <name>ATP</name>
        <dbReference type="ChEBI" id="CHEBI:30616"/>
        <note>ligand shared between two neighboring subunits</note>
    </ligand>
</feature>
<feature type="binding site" description="in other chain" evidence="1">
    <location>
        <position position="270"/>
    </location>
    <ligand>
        <name>L-methionine</name>
        <dbReference type="ChEBI" id="CHEBI:57844"/>
        <note>ligand shared between two neighboring subunits</note>
    </ligand>
</feature>